<sequence>MNYRELMQKKNVRPYVLMARFGLEKENQRSTREGLLATTEHPTVFGNRSYHPYIQTDFSETQLELITPVANSGTEMLRFLDAIHDVARRSIPEDEMLWPLSMPPQLPTKDEEIKIAKLDQYDAVLYRRYLAKEYGKRKQMVSGIHFNFEYDQALIQQLYDEQSEVTDCKQFKTKVYMKVARNFLRYRWLITYLFGASPVSEDRYFRVYDDQPQEPVRSIRNSTYGYRNHDNVKVSYASLERYLEDIHRMVENGLLSEEKEFYAPVRLRGGKQMSDLPKTGIRYIELRNLDLNPFSRLGIVEDTVDFLHYFMLYLLWTDEKEEADEWVKTGDIFNEQVALGHPHETIKLIAEGDRIFSEMIDMLDALGIRKGKEVVGKYYQQLRNPQDTVSGKMWTIIQENSNSELGNIFGNQYQSMAFERPYQLAGFREMELSTQIFLFDAIQKGLEIEILDEQEQFLKLQHGEHIEYVKNANMTSKDNYVVPLIMENKTVTKKILSAAGFHVPGGEEFSSFIEAQEAHLRYANKAFVVKPKSTNYGLGITIFKEGASLEDFTEALRIAFKEDTAVLIEEFLPGTEYRFFVLDNDVKAIMLRVPANVTGDGKHTVEELVAAKNSDPLRGTNHRAPLELIQLNDLEKLMLKEQGLTIYSVPEKEQIVYLRENSNVSTGGDSIDMTDVIDDSYKQIAIEAVAALGAKICGIDLIIPDKDVKGTRDSLTYGIIEANFNPAMHMHVYPYAGQGRRLTMDVLKLLYPEVVQ</sequence>
<name>GSHAB_ENTFA</name>
<protein>
    <recommendedName>
        <fullName evidence="2">Glutathione biosynthesis bifunctional protein GshAB</fullName>
    </recommendedName>
    <alternativeName>
        <fullName evidence="2">Gamma-GCS-GS</fullName>
        <shortName evidence="2">GCS-GS</shortName>
    </alternativeName>
    <domain>
        <recommendedName>
            <fullName evidence="2">Glutamate--cysteine ligase</fullName>
            <ecNumber evidence="2">6.3.2.2</ecNumber>
        </recommendedName>
        <alternativeName>
            <fullName evidence="2">Gamma-ECS</fullName>
            <shortName evidence="2">GCS</shortName>
        </alternativeName>
        <alternativeName>
            <fullName evidence="2">Gamma-glutamylcysteine synthetase</fullName>
        </alternativeName>
    </domain>
    <domain>
        <recommendedName>
            <fullName evidence="2">Glutathione synthetase</fullName>
            <ecNumber evidence="2">6.3.2.3</ecNumber>
        </recommendedName>
        <alternativeName>
            <fullName evidence="2">GSH synthetase</fullName>
            <shortName evidence="2">GS</shortName>
            <shortName evidence="2">GSH-S</shortName>
            <shortName evidence="2">GSHase</shortName>
        </alternativeName>
        <alternativeName>
            <fullName evidence="2">Glutathione synthase</fullName>
        </alternativeName>
    </domain>
</protein>
<evidence type="ECO:0000250" key="1"/>
<evidence type="ECO:0000255" key="2">
    <source>
        <dbReference type="HAMAP-Rule" id="MF_00782"/>
    </source>
</evidence>
<gene>
    <name evidence="2" type="primary">gshAB</name>
    <name evidence="2" type="synonym">gshF</name>
    <name type="ordered locus">EF_3089</name>
</gene>
<keyword id="KW-0067">ATP-binding</keyword>
<keyword id="KW-0317">Glutathione biosynthesis</keyword>
<keyword id="KW-0436">Ligase</keyword>
<keyword id="KW-0460">Magnesium</keyword>
<keyword id="KW-0464">Manganese</keyword>
<keyword id="KW-0479">Metal-binding</keyword>
<keyword id="KW-0511">Multifunctional enzyme</keyword>
<keyword id="KW-0547">Nucleotide-binding</keyword>
<keyword id="KW-1185">Reference proteome</keyword>
<dbReference type="EC" id="6.3.2.2" evidence="2"/>
<dbReference type="EC" id="6.3.2.3" evidence="2"/>
<dbReference type="EMBL" id="AE016830">
    <property type="protein sequence ID" value="AAO82770.1"/>
    <property type="molecule type" value="Genomic_DNA"/>
</dbReference>
<dbReference type="RefSeq" id="NP_816700.1">
    <property type="nucleotide sequence ID" value="NC_004668.1"/>
</dbReference>
<dbReference type="RefSeq" id="WP_002399785.1">
    <property type="nucleotide sequence ID" value="NZ_KE136524.1"/>
</dbReference>
<dbReference type="SMR" id="Q82ZG8"/>
<dbReference type="STRING" id="226185.EF_3089"/>
<dbReference type="EnsemblBacteria" id="AAO82770">
    <property type="protein sequence ID" value="AAO82770"/>
    <property type="gene ID" value="EF_3089"/>
</dbReference>
<dbReference type="KEGG" id="efa:EF3089"/>
<dbReference type="PATRIC" id="fig|226185.45.peg.483"/>
<dbReference type="eggNOG" id="COG1181">
    <property type="taxonomic scope" value="Bacteria"/>
</dbReference>
<dbReference type="eggNOG" id="COG2918">
    <property type="taxonomic scope" value="Bacteria"/>
</dbReference>
<dbReference type="HOGENOM" id="CLU_020728_1_0_9"/>
<dbReference type="UniPathway" id="UPA00142">
    <property type="reaction ID" value="UER00209"/>
</dbReference>
<dbReference type="UniPathway" id="UPA00142">
    <property type="reaction ID" value="UER00210"/>
</dbReference>
<dbReference type="Proteomes" id="UP000001415">
    <property type="component" value="Chromosome"/>
</dbReference>
<dbReference type="GO" id="GO:0005829">
    <property type="term" value="C:cytosol"/>
    <property type="evidence" value="ECO:0007669"/>
    <property type="project" value="TreeGrafter"/>
</dbReference>
<dbReference type="GO" id="GO:0005524">
    <property type="term" value="F:ATP binding"/>
    <property type="evidence" value="ECO:0007669"/>
    <property type="project" value="UniProtKB-UniRule"/>
</dbReference>
<dbReference type="GO" id="GO:0004357">
    <property type="term" value="F:glutamate-cysteine ligase activity"/>
    <property type="evidence" value="ECO:0007669"/>
    <property type="project" value="UniProtKB-UniRule"/>
</dbReference>
<dbReference type="GO" id="GO:0004363">
    <property type="term" value="F:glutathione synthase activity"/>
    <property type="evidence" value="ECO:0007669"/>
    <property type="project" value="UniProtKB-UniRule"/>
</dbReference>
<dbReference type="GO" id="GO:0046872">
    <property type="term" value="F:metal ion binding"/>
    <property type="evidence" value="ECO:0007669"/>
    <property type="project" value="UniProtKB-KW"/>
</dbReference>
<dbReference type="Gene3D" id="3.30.590.20">
    <property type="match status" value="1"/>
</dbReference>
<dbReference type="Gene3D" id="3.30.470.20">
    <property type="entry name" value="ATP-grasp fold, B domain"/>
    <property type="match status" value="2"/>
</dbReference>
<dbReference type="HAMAP" id="MF_00782">
    <property type="entry name" value="Glut_biosynth"/>
    <property type="match status" value="1"/>
</dbReference>
<dbReference type="InterPro" id="IPR011761">
    <property type="entry name" value="ATP-grasp"/>
</dbReference>
<dbReference type="InterPro" id="IPR003806">
    <property type="entry name" value="ATP-grasp_PylC-type"/>
</dbReference>
<dbReference type="InterPro" id="IPR014746">
    <property type="entry name" value="Gln_synth/guanido_kin_cat_dom"/>
</dbReference>
<dbReference type="InterPro" id="IPR007370">
    <property type="entry name" value="Glu_cys_ligase"/>
</dbReference>
<dbReference type="InterPro" id="IPR006335">
    <property type="entry name" value="Glut_biosynth"/>
</dbReference>
<dbReference type="InterPro" id="IPR006334">
    <property type="entry name" value="Glut_cys_ligase"/>
</dbReference>
<dbReference type="InterPro" id="IPR040657">
    <property type="entry name" value="GshAB_ATP-grasp"/>
</dbReference>
<dbReference type="NCBIfam" id="TIGR01435">
    <property type="entry name" value="glu_cys_lig_rel"/>
    <property type="match status" value="1"/>
</dbReference>
<dbReference type="NCBIfam" id="NF002688">
    <property type="entry name" value="PRK02471.1"/>
    <property type="match status" value="1"/>
</dbReference>
<dbReference type="PANTHER" id="PTHR38761">
    <property type="entry name" value="GLUTAMATE--CYSTEINE LIGASE"/>
    <property type="match status" value="1"/>
</dbReference>
<dbReference type="PANTHER" id="PTHR38761:SF1">
    <property type="entry name" value="GLUTAMATE--CYSTEINE LIGASE"/>
    <property type="match status" value="1"/>
</dbReference>
<dbReference type="Pfam" id="PF02655">
    <property type="entry name" value="ATP-grasp_3"/>
    <property type="match status" value="1"/>
</dbReference>
<dbReference type="Pfam" id="PF18419">
    <property type="entry name" value="ATP-grasp_6"/>
    <property type="match status" value="1"/>
</dbReference>
<dbReference type="Pfam" id="PF04262">
    <property type="entry name" value="Glu_cys_ligase"/>
    <property type="match status" value="1"/>
</dbReference>
<dbReference type="SUPFAM" id="SSF55931">
    <property type="entry name" value="Glutamine synthetase/guanido kinase"/>
    <property type="match status" value="1"/>
</dbReference>
<dbReference type="SUPFAM" id="SSF56059">
    <property type="entry name" value="Glutathione synthetase ATP-binding domain-like"/>
    <property type="match status" value="1"/>
</dbReference>
<dbReference type="PROSITE" id="PS50975">
    <property type="entry name" value="ATP_GRASP"/>
    <property type="match status" value="1"/>
</dbReference>
<proteinExistence type="inferred from homology"/>
<comment type="function">
    <text evidence="2">Synthesizes glutathione from L-glutamate and L-cysteine via gamma-L-glutamyl-L-cysteine.</text>
</comment>
<comment type="catalytic activity">
    <reaction evidence="2">
        <text>L-cysteine + L-glutamate + ATP = gamma-L-glutamyl-L-cysteine + ADP + phosphate + H(+)</text>
        <dbReference type="Rhea" id="RHEA:13285"/>
        <dbReference type="ChEBI" id="CHEBI:15378"/>
        <dbReference type="ChEBI" id="CHEBI:29985"/>
        <dbReference type="ChEBI" id="CHEBI:30616"/>
        <dbReference type="ChEBI" id="CHEBI:35235"/>
        <dbReference type="ChEBI" id="CHEBI:43474"/>
        <dbReference type="ChEBI" id="CHEBI:58173"/>
        <dbReference type="ChEBI" id="CHEBI:456216"/>
        <dbReference type="EC" id="6.3.2.2"/>
    </reaction>
</comment>
<comment type="catalytic activity">
    <reaction evidence="2">
        <text>gamma-L-glutamyl-L-cysteine + glycine + ATP = glutathione + ADP + phosphate + H(+)</text>
        <dbReference type="Rhea" id="RHEA:13557"/>
        <dbReference type="ChEBI" id="CHEBI:15378"/>
        <dbReference type="ChEBI" id="CHEBI:30616"/>
        <dbReference type="ChEBI" id="CHEBI:43474"/>
        <dbReference type="ChEBI" id="CHEBI:57305"/>
        <dbReference type="ChEBI" id="CHEBI:57925"/>
        <dbReference type="ChEBI" id="CHEBI:58173"/>
        <dbReference type="ChEBI" id="CHEBI:456216"/>
        <dbReference type="EC" id="6.3.2.3"/>
    </reaction>
</comment>
<comment type="cofactor">
    <cofactor evidence="1">
        <name>Mg(2+)</name>
        <dbReference type="ChEBI" id="CHEBI:18420"/>
    </cofactor>
    <cofactor evidence="1">
        <name>Mn(2+)</name>
        <dbReference type="ChEBI" id="CHEBI:29035"/>
    </cofactor>
    <text evidence="1">Binds 2 magnesium or manganese ions per subunit.</text>
</comment>
<comment type="pathway">
    <text evidence="2">Sulfur metabolism; glutathione biosynthesis; glutathione from L-cysteine and L-glutamate: step 1/2.</text>
</comment>
<comment type="pathway">
    <text evidence="2">Sulfur metabolism; glutathione biosynthesis; glutathione from L-cysteine and L-glutamate: step 2/2.</text>
</comment>
<comment type="subunit">
    <text evidence="2">Monomer.</text>
</comment>
<comment type="similarity">
    <text evidence="2">In the N-terminal section; belongs to the glutamate--cysteine ligase type 1 family. Type 2 subfamily.</text>
</comment>
<accession>Q82ZG8</accession>
<organism>
    <name type="scientific">Enterococcus faecalis (strain ATCC 700802 / V583)</name>
    <dbReference type="NCBI Taxonomy" id="226185"/>
    <lineage>
        <taxon>Bacteria</taxon>
        <taxon>Bacillati</taxon>
        <taxon>Bacillota</taxon>
        <taxon>Bacilli</taxon>
        <taxon>Lactobacillales</taxon>
        <taxon>Enterococcaceae</taxon>
        <taxon>Enterococcus</taxon>
    </lineage>
</organism>
<feature type="chain" id="PRO_0000192551" description="Glutathione biosynthesis bifunctional protein GshAB">
    <location>
        <begin position="1"/>
        <end position="756"/>
    </location>
</feature>
<feature type="domain" description="ATP-grasp" evidence="2">
    <location>
        <begin position="493"/>
        <end position="751"/>
    </location>
</feature>
<feature type="region of interest" description="Glutamate--cysteine ligase">
    <location>
        <begin position="1"/>
        <end position="338"/>
    </location>
</feature>
<feature type="binding site" evidence="2">
    <location>
        <begin position="520"/>
        <end position="578"/>
    </location>
    <ligand>
        <name>ATP</name>
        <dbReference type="ChEBI" id="CHEBI:30616"/>
    </ligand>
</feature>
<feature type="binding site" evidence="2">
    <location>
        <position position="700"/>
    </location>
    <ligand>
        <name>Mg(2+)</name>
        <dbReference type="ChEBI" id="CHEBI:18420"/>
        <label>1</label>
    </ligand>
</feature>
<feature type="binding site" evidence="2">
    <location>
        <position position="700"/>
    </location>
    <ligand>
        <name>Mn(2+)</name>
        <dbReference type="ChEBI" id="CHEBI:29035"/>
        <label>1</label>
    </ligand>
</feature>
<feature type="binding site" evidence="2">
    <location>
        <position position="721"/>
    </location>
    <ligand>
        <name>Mg(2+)</name>
        <dbReference type="ChEBI" id="CHEBI:18420"/>
        <label>1</label>
    </ligand>
</feature>
<feature type="binding site" evidence="2">
    <location>
        <position position="721"/>
    </location>
    <ligand>
        <name>Mg(2+)</name>
        <dbReference type="ChEBI" id="CHEBI:18420"/>
        <label>2</label>
    </ligand>
</feature>
<feature type="binding site" evidence="2">
    <location>
        <position position="721"/>
    </location>
    <ligand>
        <name>Mn(2+)</name>
        <dbReference type="ChEBI" id="CHEBI:29035"/>
        <label>1</label>
    </ligand>
</feature>
<feature type="binding site" evidence="2">
    <location>
        <position position="721"/>
    </location>
    <ligand>
        <name>Mn(2+)</name>
        <dbReference type="ChEBI" id="CHEBI:29035"/>
        <label>2</label>
    </ligand>
</feature>
<feature type="binding site" evidence="2">
    <location>
        <position position="723"/>
    </location>
    <ligand>
        <name>Mg(2+)</name>
        <dbReference type="ChEBI" id="CHEBI:18420"/>
        <label>2</label>
    </ligand>
</feature>
<feature type="binding site" evidence="2">
    <location>
        <position position="723"/>
    </location>
    <ligand>
        <name>Mn(2+)</name>
        <dbReference type="ChEBI" id="CHEBI:29035"/>
        <label>2</label>
    </ligand>
</feature>
<reference key="1">
    <citation type="journal article" date="2003" name="Science">
        <title>Role of mobile DNA in the evolution of vancomycin-resistant Enterococcus faecalis.</title>
        <authorList>
            <person name="Paulsen I.T."/>
            <person name="Banerjei L."/>
            <person name="Myers G.S.A."/>
            <person name="Nelson K.E."/>
            <person name="Seshadri R."/>
            <person name="Read T.D."/>
            <person name="Fouts D.E."/>
            <person name="Eisen J.A."/>
            <person name="Gill S.R."/>
            <person name="Heidelberg J.F."/>
            <person name="Tettelin H."/>
            <person name="Dodson R.J."/>
            <person name="Umayam L.A."/>
            <person name="Brinkac L.M."/>
            <person name="Beanan M.J."/>
            <person name="Daugherty S.C."/>
            <person name="DeBoy R.T."/>
            <person name="Durkin S.A."/>
            <person name="Kolonay J.F."/>
            <person name="Madupu R."/>
            <person name="Nelson W.C."/>
            <person name="Vamathevan J.J."/>
            <person name="Tran B."/>
            <person name="Upton J."/>
            <person name="Hansen T."/>
            <person name="Shetty J."/>
            <person name="Khouri H.M."/>
            <person name="Utterback T.R."/>
            <person name="Radune D."/>
            <person name="Ketchum K.A."/>
            <person name="Dougherty B.A."/>
            <person name="Fraser C.M."/>
        </authorList>
    </citation>
    <scope>NUCLEOTIDE SEQUENCE [LARGE SCALE GENOMIC DNA]</scope>
    <source>
        <strain>ATCC 700802 / V583</strain>
    </source>
</reference>